<reference key="1">
    <citation type="journal article" date="2004" name="Proc. Natl. Acad. Sci. U.S.A.">
        <title>The diploid genome sequence of Candida albicans.</title>
        <authorList>
            <person name="Jones T."/>
            <person name="Federspiel N.A."/>
            <person name="Chibana H."/>
            <person name="Dungan J."/>
            <person name="Kalman S."/>
            <person name="Magee B.B."/>
            <person name="Newport G."/>
            <person name="Thorstenson Y.R."/>
            <person name="Agabian N."/>
            <person name="Magee P.T."/>
            <person name="Davis R.W."/>
            <person name="Scherer S."/>
        </authorList>
    </citation>
    <scope>NUCLEOTIDE SEQUENCE [LARGE SCALE GENOMIC DNA]</scope>
    <source>
        <strain>SC5314 / ATCC MYA-2876</strain>
    </source>
</reference>
<reference key="2">
    <citation type="journal article" date="2007" name="Genome Biol.">
        <title>Assembly of the Candida albicans genome into sixteen supercontigs aligned on the eight chromosomes.</title>
        <authorList>
            <person name="van het Hoog M."/>
            <person name="Rast T.J."/>
            <person name="Martchenko M."/>
            <person name="Grindle S."/>
            <person name="Dignard D."/>
            <person name="Hogues H."/>
            <person name="Cuomo C."/>
            <person name="Berriman M."/>
            <person name="Scherer S."/>
            <person name="Magee B.B."/>
            <person name="Whiteway M."/>
            <person name="Chibana H."/>
            <person name="Nantel A."/>
            <person name="Magee P.T."/>
        </authorList>
    </citation>
    <scope>GENOME REANNOTATION</scope>
    <source>
        <strain>SC5314 / ATCC MYA-2876</strain>
    </source>
</reference>
<reference key="3">
    <citation type="journal article" date="2013" name="Genome Biol.">
        <title>Assembly of a phased diploid Candida albicans genome facilitates allele-specific measurements and provides a simple model for repeat and indel structure.</title>
        <authorList>
            <person name="Muzzey D."/>
            <person name="Schwartz K."/>
            <person name="Weissman J.S."/>
            <person name="Sherlock G."/>
        </authorList>
    </citation>
    <scope>NUCLEOTIDE SEQUENCE [LARGE SCALE GENOMIC DNA]</scope>
    <scope>GENOME REANNOTATION</scope>
    <source>
        <strain>SC5314 / ATCC MYA-2876</strain>
    </source>
</reference>
<dbReference type="EC" id="4.2.1.109" evidence="1"/>
<dbReference type="EMBL" id="CP017627">
    <property type="protein sequence ID" value="AOW29707.1"/>
    <property type="molecule type" value="Genomic_DNA"/>
</dbReference>
<dbReference type="RefSeq" id="XP_720613.1">
    <property type="nucleotide sequence ID" value="XM_715520.1"/>
</dbReference>
<dbReference type="SMR" id="Q5AG73"/>
<dbReference type="FunCoup" id="Q5AG73">
    <property type="interactions" value="260"/>
</dbReference>
<dbReference type="STRING" id="237561.Q5AG73"/>
<dbReference type="EnsemblFungi" id="C5_02820C_A-T">
    <property type="protein sequence ID" value="C5_02820C_A-T-p1"/>
    <property type="gene ID" value="C5_02820C_A"/>
</dbReference>
<dbReference type="GeneID" id="3637808"/>
<dbReference type="KEGG" id="cal:CAALFM_C502820CA"/>
<dbReference type="CGD" id="CAL0000179829">
    <property type="gene designation" value="orf19.11782"/>
</dbReference>
<dbReference type="VEuPathDB" id="FungiDB:C5_02820C_A"/>
<dbReference type="eggNOG" id="KOG2631">
    <property type="taxonomic scope" value="Eukaryota"/>
</dbReference>
<dbReference type="HOGENOM" id="CLU_006033_4_0_1"/>
<dbReference type="InParanoid" id="Q5AG73"/>
<dbReference type="OMA" id="WFPGTSG"/>
<dbReference type="OrthoDB" id="191080at2759"/>
<dbReference type="UniPathway" id="UPA00904">
    <property type="reaction ID" value="UER00875"/>
</dbReference>
<dbReference type="PRO" id="PR:Q5AG73"/>
<dbReference type="Proteomes" id="UP000000559">
    <property type="component" value="Chromosome 5"/>
</dbReference>
<dbReference type="GO" id="GO:0005737">
    <property type="term" value="C:cytoplasm"/>
    <property type="evidence" value="ECO:0000318"/>
    <property type="project" value="GO_Central"/>
</dbReference>
<dbReference type="GO" id="GO:0046570">
    <property type="term" value="F:methylthioribulose 1-phosphate dehydratase activity"/>
    <property type="evidence" value="ECO:0000318"/>
    <property type="project" value="GO_Central"/>
</dbReference>
<dbReference type="GO" id="GO:0008270">
    <property type="term" value="F:zinc ion binding"/>
    <property type="evidence" value="ECO:0007669"/>
    <property type="project" value="UniProtKB-UniRule"/>
</dbReference>
<dbReference type="GO" id="GO:0019509">
    <property type="term" value="P:L-methionine salvage from methylthioadenosine"/>
    <property type="evidence" value="ECO:0000318"/>
    <property type="project" value="GO_Central"/>
</dbReference>
<dbReference type="FunFam" id="3.40.225.10:FF:000003">
    <property type="entry name" value="Methylthioribulose-1-phosphate dehydratase"/>
    <property type="match status" value="1"/>
</dbReference>
<dbReference type="Gene3D" id="3.40.225.10">
    <property type="entry name" value="Class II aldolase/adducin N-terminal domain"/>
    <property type="match status" value="1"/>
</dbReference>
<dbReference type="HAMAP" id="MF_03116">
    <property type="entry name" value="Salvage_MtnB_euk"/>
    <property type="match status" value="1"/>
</dbReference>
<dbReference type="InterPro" id="IPR001303">
    <property type="entry name" value="Aldolase_II/adducin_N"/>
</dbReference>
<dbReference type="InterPro" id="IPR036409">
    <property type="entry name" value="Aldolase_II/adducin_N_sf"/>
</dbReference>
<dbReference type="InterPro" id="IPR017714">
    <property type="entry name" value="MethylthioRu-1-P_deHdtase_MtnB"/>
</dbReference>
<dbReference type="InterPro" id="IPR027514">
    <property type="entry name" value="Salvage_MtnB_euk"/>
</dbReference>
<dbReference type="NCBIfam" id="TIGR03328">
    <property type="entry name" value="salvage_mtnB"/>
    <property type="match status" value="1"/>
</dbReference>
<dbReference type="PANTHER" id="PTHR10640">
    <property type="entry name" value="METHYLTHIORIBULOSE-1-PHOSPHATE DEHYDRATASE"/>
    <property type="match status" value="1"/>
</dbReference>
<dbReference type="PANTHER" id="PTHR10640:SF7">
    <property type="entry name" value="METHYLTHIORIBULOSE-1-PHOSPHATE DEHYDRATASE"/>
    <property type="match status" value="1"/>
</dbReference>
<dbReference type="Pfam" id="PF00596">
    <property type="entry name" value="Aldolase_II"/>
    <property type="match status" value="1"/>
</dbReference>
<dbReference type="SMART" id="SM01007">
    <property type="entry name" value="Aldolase_II"/>
    <property type="match status" value="1"/>
</dbReference>
<dbReference type="SUPFAM" id="SSF53639">
    <property type="entry name" value="AraD/HMP-PK domain-like"/>
    <property type="match status" value="1"/>
</dbReference>
<keyword id="KW-0028">Amino-acid biosynthesis</keyword>
<keyword id="KW-0963">Cytoplasm</keyword>
<keyword id="KW-0456">Lyase</keyword>
<keyword id="KW-0479">Metal-binding</keyword>
<keyword id="KW-0486">Methionine biosynthesis</keyword>
<keyword id="KW-1185">Reference proteome</keyword>
<keyword id="KW-0862">Zinc</keyword>
<name>MTNB_CANAL</name>
<comment type="function">
    <text evidence="1">Catalyzes the dehydration of methylthioribulose-1-phosphate (MTRu-1-P) into 2,3-diketo-5-methylthiopentyl-1-phosphate (DK-MTP-1-P).</text>
</comment>
<comment type="catalytic activity">
    <reaction evidence="1">
        <text>5-(methylsulfanyl)-D-ribulose 1-phosphate = 5-methylsulfanyl-2,3-dioxopentyl phosphate + H2O</text>
        <dbReference type="Rhea" id="RHEA:15549"/>
        <dbReference type="ChEBI" id="CHEBI:15377"/>
        <dbReference type="ChEBI" id="CHEBI:58548"/>
        <dbReference type="ChEBI" id="CHEBI:58828"/>
        <dbReference type="EC" id="4.2.1.109"/>
    </reaction>
</comment>
<comment type="cofactor">
    <cofactor evidence="1">
        <name>Zn(2+)</name>
        <dbReference type="ChEBI" id="CHEBI:29105"/>
    </cofactor>
    <text evidence="1">Binds 1 zinc ion per subunit.</text>
</comment>
<comment type="pathway">
    <text evidence="1">Amino-acid biosynthesis; L-methionine biosynthesis via salvage pathway; L-methionine from S-methyl-5-thio-alpha-D-ribose 1-phosphate: step 2/6.</text>
</comment>
<comment type="subcellular location">
    <subcellularLocation>
        <location evidence="1">Cytoplasm</location>
    </subcellularLocation>
</comment>
<comment type="similarity">
    <text evidence="1">Belongs to the aldolase class II family. MtnB subfamily.</text>
</comment>
<accession>Q5AG73</accession>
<accession>A0A1D8PNJ1</accession>
<evidence type="ECO:0000255" key="1">
    <source>
        <dbReference type="HAMAP-Rule" id="MF_03116"/>
    </source>
</evidence>
<gene>
    <name evidence="1" type="primary">MDE1</name>
    <name type="ordered locus">CAALFM_C502820CA</name>
    <name type="ORF">CaO19.11782</name>
    <name type="ORF">CaO19.4306</name>
</gene>
<feature type="chain" id="PRO_0000393814" description="Methylthioribulose-1-phosphate dehydratase">
    <location>
        <begin position="1"/>
        <end position="270"/>
    </location>
</feature>
<feature type="active site" description="Proton donor/acceptor" evidence="1">
    <location>
        <position position="165"/>
    </location>
</feature>
<feature type="binding site" evidence="1">
    <location>
        <position position="122"/>
    </location>
    <ligand>
        <name>substrate</name>
    </ligand>
</feature>
<feature type="binding site" evidence="1">
    <location>
        <position position="140"/>
    </location>
    <ligand>
        <name>Zn(2+)</name>
        <dbReference type="ChEBI" id="CHEBI:29105"/>
    </ligand>
</feature>
<feature type="binding site" evidence="1">
    <location>
        <position position="142"/>
    </location>
    <ligand>
        <name>Zn(2+)</name>
        <dbReference type="ChEBI" id="CHEBI:29105"/>
    </ligand>
</feature>
<feature type="binding site" evidence="1">
    <location>
        <position position="230"/>
    </location>
    <ligand>
        <name>Zn(2+)</name>
        <dbReference type="ChEBI" id="CHEBI:29105"/>
    </ligand>
</feature>
<proteinExistence type="inferred from homology"/>
<organism>
    <name type="scientific">Candida albicans (strain SC5314 / ATCC MYA-2876)</name>
    <name type="common">Yeast</name>
    <dbReference type="NCBI Taxonomy" id="237561"/>
    <lineage>
        <taxon>Eukaryota</taxon>
        <taxon>Fungi</taxon>
        <taxon>Dikarya</taxon>
        <taxon>Ascomycota</taxon>
        <taxon>Saccharomycotina</taxon>
        <taxon>Pichiomycetes</taxon>
        <taxon>Debaryomycetaceae</taxon>
        <taxon>Candida/Lodderomyces clade</taxon>
        <taxon>Candida</taxon>
    </lineage>
</organism>
<protein>
    <recommendedName>
        <fullName evidence="1">Methylthioribulose-1-phosphate dehydratase</fullName>
        <shortName evidence="1">MTRu-1-P dehydratase</shortName>
        <ecNumber evidence="1">4.2.1.109</ecNumber>
    </recommendedName>
</protein>
<sequence>MSAPCHCKHVDDSSSNDKLSALSPELQQEFKDPNHPANLICELCRLFYDNNWVTGTGGGISIRDVDGPNPNLVYIAPSGVQKERIQPWEMFLVELPDEKILRTPNDIPKELTKSYKYKPSACTPLFISCYTLRDAGACIHTHSQHAVMVTLFFENEKEFAISHIEQIKALPKLKYNDETGKIEKIGSMEYYDKLVIPIIENTPHEEDLTDSLQEAIKNYPGASAVLVRRHGIYVWGETVWKAKVYNEAIDYLLELAVKMKLAGIPLVKQE</sequence>